<proteinExistence type="inferred from homology"/>
<dbReference type="EC" id="6.3.4.22" evidence="1"/>
<dbReference type="EMBL" id="CP001014">
    <property type="protein sequence ID" value="ACB39083.1"/>
    <property type="molecule type" value="Genomic_DNA"/>
</dbReference>
<dbReference type="RefSeq" id="WP_012349504.1">
    <property type="nucleotide sequence ID" value="NC_010525.1"/>
</dbReference>
<dbReference type="SMR" id="B1YAA9"/>
<dbReference type="STRING" id="444157.Tneu_0126"/>
<dbReference type="GeneID" id="6165824"/>
<dbReference type="KEGG" id="tne:Tneu_0126"/>
<dbReference type="eggNOG" id="arCOG01115">
    <property type="taxonomic scope" value="Archaea"/>
</dbReference>
<dbReference type="HOGENOM" id="CLU_675459_0_0_2"/>
<dbReference type="OrthoDB" id="39189at2157"/>
<dbReference type="Proteomes" id="UP000001694">
    <property type="component" value="Chromosome"/>
</dbReference>
<dbReference type="GO" id="GO:0005737">
    <property type="term" value="C:cytoplasm"/>
    <property type="evidence" value="ECO:0007669"/>
    <property type="project" value="UniProtKB-SubCell"/>
</dbReference>
<dbReference type="GO" id="GO:0005524">
    <property type="term" value="F:ATP binding"/>
    <property type="evidence" value="ECO:0007669"/>
    <property type="project" value="UniProtKB-KW"/>
</dbReference>
<dbReference type="GO" id="GO:0016879">
    <property type="term" value="F:ligase activity, forming carbon-nitrogen bonds"/>
    <property type="evidence" value="ECO:0007669"/>
    <property type="project" value="UniProtKB-UniRule"/>
</dbReference>
<dbReference type="GO" id="GO:0002101">
    <property type="term" value="P:tRNA wobble cytosine modification"/>
    <property type="evidence" value="ECO:0007669"/>
    <property type="project" value="UniProtKB-UniRule"/>
</dbReference>
<dbReference type="Gene3D" id="2.40.50.1010">
    <property type="match status" value="1"/>
</dbReference>
<dbReference type="Gene3D" id="3.30.70.2200">
    <property type="match status" value="1"/>
</dbReference>
<dbReference type="Gene3D" id="3.90.600.20">
    <property type="match status" value="1"/>
</dbReference>
<dbReference type="HAMAP" id="MF_01892">
    <property type="entry name" value="tRNA_Ile2_agm2C_synt"/>
    <property type="match status" value="1"/>
</dbReference>
<dbReference type="InterPro" id="IPR046349">
    <property type="entry name" value="C1-like_sf"/>
</dbReference>
<dbReference type="InterPro" id="IPR053870">
    <property type="entry name" value="TiaS-like_TCKD"/>
</dbReference>
<dbReference type="InterPro" id="IPR013696">
    <property type="entry name" value="TiaS_FLD"/>
</dbReference>
<dbReference type="InterPro" id="IPR024913">
    <property type="entry name" value="tRNA_Ile2__agm2C_synt"/>
</dbReference>
<dbReference type="InterPro" id="IPR055394">
    <property type="entry name" value="Zn_ribbon_TiaS"/>
</dbReference>
<dbReference type="PANTHER" id="PTHR40705">
    <property type="entry name" value="TRNA(ILE2) 2-AGMATINYLCYTIDINE SYNTHETASE TIAS"/>
    <property type="match status" value="1"/>
</dbReference>
<dbReference type="PANTHER" id="PTHR40705:SF1">
    <property type="entry name" value="TRNA(ILE2) 2-AGMATINYLCYTIDINE SYNTHETASE TIAS"/>
    <property type="match status" value="1"/>
</dbReference>
<dbReference type="Pfam" id="PF08489">
    <property type="entry name" value="TiaS_FLD"/>
    <property type="match status" value="1"/>
</dbReference>
<dbReference type="Pfam" id="PF22641">
    <property type="entry name" value="TiaS_TCKD"/>
    <property type="match status" value="1"/>
</dbReference>
<dbReference type="Pfam" id="PF23783">
    <property type="entry name" value="Zn_ribbon_TiaS"/>
    <property type="match status" value="1"/>
</dbReference>
<dbReference type="SUPFAM" id="SSF57889">
    <property type="entry name" value="Cysteine-rich domain"/>
    <property type="match status" value="1"/>
</dbReference>
<keyword id="KW-0067">ATP-binding</keyword>
<keyword id="KW-0963">Cytoplasm</keyword>
<keyword id="KW-0436">Ligase</keyword>
<keyword id="KW-0547">Nucleotide-binding</keyword>
<keyword id="KW-0819">tRNA processing</keyword>
<gene>
    <name evidence="1" type="primary">tiaS</name>
    <name type="ordered locus">Tneu_0126</name>
</gene>
<organism>
    <name type="scientific">Pyrobaculum neutrophilum (strain DSM 2338 / JCM 9278 / NBRC 100436 / V24Sta)</name>
    <name type="common">Thermoproteus neutrophilus</name>
    <dbReference type="NCBI Taxonomy" id="444157"/>
    <lineage>
        <taxon>Archaea</taxon>
        <taxon>Thermoproteota</taxon>
        <taxon>Thermoprotei</taxon>
        <taxon>Thermoproteales</taxon>
        <taxon>Thermoproteaceae</taxon>
        <taxon>Pyrobaculum</taxon>
    </lineage>
</organism>
<sequence>MRVVVGIDDTDSHRGGCTTYVGYLLAKEVLRRWGAGAFRDFPRLVRLNPNVPFKTRGNAAVALDLEIPEGDVEELWRLAVETVAAHSRREGKTDPGVAMAAGGVPERAKTLYRMALTQVVSISAAERAGVLTWGGRGKIGAVAAVGAYFPKSTFELIAYRRGDREAIPPDLVRLLEALTYPYTFHNVDRRRVLIEPRGPDPVYYGIRGLTPQHLRYALSLLEAWGYRPAGWVIYRTNQATDAHIELGVFYGDPLPYSFYRARGLVVEARRVAGRHLVGRLDSGLRFVAYRHLGRLASELERCLRCDVVLYGGLKPRRGGLYLYVERAYVLGRYIPARSRCTYCGGSLESLGRGRGWRCRRCGAVFHSAPIRWLYDTAPRRALLPRPGEWRHLLKPPDVDPTIPNFFSPSSAEWIG</sequence>
<feature type="chain" id="PRO_0000407307" description="tRNA(Ile2) 2-agmatinylcytidine synthetase TiaS">
    <location>
        <begin position="1"/>
        <end position="415"/>
    </location>
</feature>
<name>TIAS_PYRNV</name>
<evidence type="ECO:0000255" key="1">
    <source>
        <dbReference type="HAMAP-Rule" id="MF_01892"/>
    </source>
</evidence>
<comment type="function">
    <text evidence="1">ATP-dependent agmatine transferase that catalyzes the formation of 2-agmatinylcytidine (agm2C) at the wobble position (C34) of tRNA(Ile2), converting the codon specificity from AUG to AUA.</text>
</comment>
<comment type="catalytic activity">
    <reaction evidence="1">
        <text>cytidine(34) in tRNA(Ile2) + agmatine + ATP + H2O = 2-agmatinylcytidine(34) in tRNA(Ile2) + AMP + 2 phosphate + 2 H(+)</text>
        <dbReference type="Rhea" id="RHEA:43608"/>
        <dbReference type="Rhea" id="RHEA-COMP:10625"/>
        <dbReference type="Rhea" id="RHEA-COMP:10626"/>
        <dbReference type="ChEBI" id="CHEBI:15377"/>
        <dbReference type="ChEBI" id="CHEBI:15378"/>
        <dbReference type="ChEBI" id="CHEBI:30616"/>
        <dbReference type="ChEBI" id="CHEBI:43474"/>
        <dbReference type="ChEBI" id="CHEBI:58145"/>
        <dbReference type="ChEBI" id="CHEBI:82748"/>
        <dbReference type="ChEBI" id="CHEBI:83545"/>
        <dbReference type="ChEBI" id="CHEBI:456215"/>
        <dbReference type="EC" id="6.3.4.22"/>
    </reaction>
</comment>
<comment type="subcellular location">
    <subcellularLocation>
        <location evidence="1">Cytoplasm</location>
    </subcellularLocation>
</comment>
<comment type="similarity">
    <text evidence="1">Belongs to the TiaS family.</text>
</comment>
<protein>
    <recommendedName>
        <fullName evidence="1">tRNA(Ile2) 2-agmatinylcytidine synthetase TiaS</fullName>
        <shortName evidence="1">tRNA(Ile2)-agm2C synthetase</shortName>
        <ecNumber evidence="1">6.3.4.22</ecNumber>
    </recommendedName>
    <alternativeName>
        <fullName evidence="1">tRNA(Ile2) agmatidine synthetase</fullName>
    </alternativeName>
</protein>
<accession>B1YAA9</accession>
<reference key="1">
    <citation type="submission" date="2008-03" db="EMBL/GenBank/DDBJ databases">
        <title>Complete sequence of Thermoproteus neutrophilus V24Sta.</title>
        <authorList>
            <consortium name="US DOE Joint Genome Institute"/>
            <person name="Copeland A."/>
            <person name="Lucas S."/>
            <person name="Lapidus A."/>
            <person name="Glavina del Rio T."/>
            <person name="Dalin E."/>
            <person name="Tice H."/>
            <person name="Bruce D."/>
            <person name="Goodwin L."/>
            <person name="Pitluck S."/>
            <person name="Sims D."/>
            <person name="Brettin T."/>
            <person name="Detter J.C."/>
            <person name="Han C."/>
            <person name="Kuske C.R."/>
            <person name="Schmutz J."/>
            <person name="Larimer F."/>
            <person name="Land M."/>
            <person name="Hauser L."/>
            <person name="Kyrpides N."/>
            <person name="Mikhailova N."/>
            <person name="Biddle J.F."/>
            <person name="Zhang Z."/>
            <person name="Fitz-Gibbon S.T."/>
            <person name="Lowe T.M."/>
            <person name="Saltikov C."/>
            <person name="House C.H."/>
            <person name="Richardson P."/>
        </authorList>
    </citation>
    <scope>NUCLEOTIDE SEQUENCE [LARGE SCALE GENOMIC DNA]</scope>
    <source>
        <strain>DSM 2338 / JCM 9278 / NBRC 100436 / V24Sta</strain>
    </source>
</reference>